<feature type="chain" id="PRO_0000093866" description="Putative Do-like 15 protein">
    <location>
        <begin position="1"/>
        <end position="198"/>
    </location>
</feature>
<feature type="region of interest" description="Serine protease">
    <location>
        <begin position="48"/>
        <end position="198"/>
    </location>
</feature>
<feature type="active site" description="Charge relay system" evidence="1">
    <location>
        <position position="86"/>
    </location>
</feature>
<feature type="active site" description="Charge relay system" evidence="1">
    <location>
        <position position="175"/>
    </location>
</feature>
<keyword id="KW-1185">Reference proteome</keyword>
<proteinExistence type="inferred from homology"/>
<reference key="1">
    <citation type="journal article" date="2000" name="DNA Res.">
        <title>Structural analysis of Arabidopsis thaliana chromosome 5. X. Sequence features of the regions of 3,076,755 bp covered by sixty P1 and TAC clones.</title>
        <authorList>
            <person name="Sato S."/>
            <person name="Nakamura Y."/>
            <person name="Kaneko T."/>
            <person name="Katoh T."/>
            <person name="Asamizu E."/>
            <person name="Kotani H."/>
            <person name="Tabata S."/>
        </authorList>
    </citation>
    <scope>NUCLEOTIDE SEQUENCE [LARGE SCALE GENOMIC DNA]</scope>
    <source>
        <strain>cv. Columbia</strain>
    </source>
</reference>
<reference key="2">
    <citation type="journal article" date="2017" name="Plant J.">
        <title>Araport11: a complete reannotation of the Arabidopsis thaliana reference genome.</title>
        <authorList>
            <person name="Cheng C.Y."/>
            <person name="Krishnakumar V."/>
            <person name="Chan A.P."/>
            <person name="Thibaud-Nissen F."/>
            <person name="Schobel S."/>
            <person name="Town C.D."/>
        </authorList>
    </citation>
    <scope>GENOME REANNOTATION</scope>
    <source>
        <strain>cv. Columbia</strain>
    </source>
</reference>
<comment type="similarity">
    <text evidence="2">Belongs to the peptidase S1B family.</text>
</comment>
<comment type="caution">
    <text evidence="2">Lacks the conserved Asp residue in position 117 essential for protease activity.</text>
</comment>
<evidence type="ECO:0000250" key="1"/>
<evidence type="ECO:0000305" key="2"/>
<protein>
    <recommendedName>
        <fullName>Putative Do-like 15 protein</fullName>
    </recommendedName>
</protein>
<organism>
    <name type="scientific">Arabidopsis thaliana</name>
    <name type="common">Mouse-ear cress</name>
    <dbReference type="NCBI Taxonomy" id="3702"/>
    <lineage>
        <taxon>Eukaryota</taxon>
        <taxon>Viridiplantae</taxon>
        <taxon>Streptophyta</taxon>
        <taxon>Embryophyta</taxon>
        <taxon>Tracheophyta</taxon>
        <taxon>Spermatophyta</taxon>
        <taxon>Magnoliopsida</taxon>
        <taxon>eudicotyledons</taxon>
        <taxon>Gunneridae</taxon>
        <taxon>Pentapetalae</taxon>
        <taxon>rosids</taxon>
        <taxon>malvids</taxon>
        <taxon>Brassicales</taxon>
        <taxon>Brassicaceae</taxon>
        <taxon>Camelineae</taxon>
        <taxon>Arabidopsis</taxon>
    </lineage>
</organism>
<gene>
    <name type="primary">DEGP15</name>
    <name type="ordered locus">At5g54745</name>
    <name type="ORF">K5F14.15</name>
</gene>
<name>DGP15_ARATH</name>
<dbReference type="EMBL" id="AB022214">
    <property type="status" value="NOT_ANNOTATED_CDS"/>
    <property type="molecule type" value="Genomic_DNA"/>
</dbReference>
<dbReference type="EMBL" id="CP002688">
    <property type="protein sequence ID" value="AED96533.1"/>
    <property type="molecule type" value="Genomic_DNA"/>
</dbReference>
<dbReference type="SMR" id="Q3E8B4"/>
<dbReference type="STRING" id="3702.Q3E8B4"/>
<dbReference type="PaxDb" id="3702-AT5G54745.1"/>
<dbReference type="ProteomicsDB" id="224100"/>
<dbReference type="EnsemblPlants" id="AT5G54745.1">
    <property type="protein sequence ID" value="AT5G54745.1"/>
    <property type="gene ID" value="AT5G54745"/>
</dbReference>
<dbReference type="Gramene" id="AT5G54745.1">
    <property type="protein sequence ID" value="AT5G54745.1"/>
    <property type="gene ID" value="AT5G54745"/>
</dbReference>
<dbReference type="KEGG" id="ath:AT5G54745"/>
<dbReference type="Araport" id="AT5G54745"/>
<dbReference type="TAIR" id="AT5G54745">
    <property type="gene designation" value="DEG16"/>
</dbReference>
<dbReference type="eggNOG" id="KOG1320">
    <property type="taxonomic scope" value="Eukaryota"/>
</dbReference>
<dbReference type="HOGENOM" id="CLU_1379831_0_0_1"/>
<dbReference type="InParanoid" id="Q3E8B4"/>
<dbReference type="OMA" id="DACINGG"/>
<dbReference type="OrthoDB" id="4217619at2759"/>
<dbReference type="PhylomeDB" id="Q3E8B4"/>
<dbReference type="PRO" id="PR:Q3E8B4"/>
<dbReference type="Proteomes" id="UP000006548">
    <property type="component" value="Chromosome 5"/>
</dbReference>
<dbReference type="ExpressionAtlas" id="Q3E8B4">
    <property type="expression patterns" value="baseline and differential"/>
</dbReference>
<dbReference type="Gene3D" id="2.40.10.10">
    <property type="entry name" value="Trypsin-like serine proteases"/>
    <property type="match status" value="2"/>
</dbReference>
<dbReference type="InterPro" id="IPR009003">
    <property type="entry name" value="Peptidase_S1_PA"/>
</dbReference>
<dbReference type="InterPro" id="IPR043504">
    <property type="entry name" value="Peptidase_S1_PA_chymotrypsin"/>
</dbReference>
<dbReference type="PANTHER" id="PTHR45980">
    <property type="match status" value="1"/>
</dbReference>
<dbReference type="PANTHER" id="PTHR45980:SF9">
    <property type="entry name" value="PROTEASE DO-LIKE 10, MITOCHONDRIAL-RELATED"/>
    <property type="match status" value="1"/>
</dbReference>
<dbReference type="Pfam" id="PF13365">
    <property type="entry name" value="Trypsin_2"/>
    <property type="match status" value="1"/>
</dbReference>
<dbReference type="SUPFAM" id="SSF50494">
    <property type="entry name" value="Trypsin-like serine proteases"/>
    <property type="match status" value="1"/>
</dbReference>
<accession>Q3E8B4</accession>
<sequence length="198" mass="21721">MSNQVNDISYVSLIQVNIVLNKNIILWLGSATPRALRDIDLAQDSVVKIFSFSREPNVVQPWQTTEKEYSSSGFAISGRRILTNAHVVGDHSYLQVRKHGSPTKYKAEVKAFGIFGARRYTFIGETIYALGYPRDGDIISVTKGIVTRVEPQKYAHSSIEILTIQTDACINGGKSGGPVVMGNKVAGVVFENDSPSDK</sequence>